<name>GALDH_ARATH</name>
<accession>O81884</accession>
<accession>D9IZZ0</accession>
<keyword id="KW-0119">Carbohydrate metabolism</keyword>
<keyword id="KW-0299">Galactose metabolism</keyword>
<keyword id="KW-0520">NAD</keyword>
<keyword id="KW-0560">Oxidoreductase</keyword>
<keyword id="KW-1185">Reference proteome</keyword>
<dbReference type="EC" id="1.1.1.316"/>
<dbReference type="EMBL" id="AJ417563">
    <property type="protein sequence ID" value="CAD10386.1"/>
    <property type="molecule type" value="mRNA"/>
</dbReference>
<dbReference type="EMBL" id="HM230668">
    <property type="protein sequence ID" value="ADJ21815.1"/>
    <property type="molecule type" value="mRNA"/>
</dbReference>
<dbReference type="EMBL" id="AL031394">
    <property type="protein sequence ID" value="CAA20580.1"/>
    <property type="molecule type" value="Genomic_DNA"/>
</dbReference>
<dbReference type="EMBL" id="AL161583">
    <property type="protein sequence ID" value="CAB80084.1"/>
    <property type="molecule type" value="Genomic_DNA"/>
</dbReference>
<dbReference type="EMBL" id="CP002687">
    <property type="protein sequence ID" value="AEE86264.1"/>
    <property type="molecule type" value="Genomic_DNA"/>
</dbReference>
<dbReference type="EMBL" id="AY050377">
    <property type="protein sequence ID" value="AAK91395.1"/>
    <property type="molecule type" value="mRNA"/>
</dbReference>
<dbReference type="EMBL" id="AY090337">
    <property type="protein sequence ID" value="AAL90998.1"/>
    <property type="molecule type" value="mRNA"/>
</dbReference>
<dbReference type="PIR" id="T04984">
    <property type="entry name" value="T04984"/>
</dbReference>
<dbReference type="RefSeq" id="NP_195093.1">
    <property type="nucleotide sequence ID" value="NM_119525.6"/>
</dbReference>
<dbReference type="SMR" id="O81884"/>
<dbReference type="FunCoup" id="O81884">
    <property type="interactions" value="1059"/>
</dbReference>
<dbReference type="STRING" id="3702.O81884"/>
<dbReference type="PaxDb" id="3702-AT4G33670.1"/>
<dbReference type="ProteomicsDB" id="248602"/>
<dbReference type="EnsemblPlants" id="AT4G33670.1">
    <property type="protein sequence ID" value="AT4G33670.1"/>
    <property type="gene ID" value="AT4G33670"/>
</dbReference>
<dbReference type="GeneID" id="829509"/>
<dbReference type="Gramene" id="AT4G33670.1">
    <property type="protein sequence ID" value="AT4G33670.1"/>
    <property type="gene ID" value="AT4G33670"/>
</dbReference>
<dbReference type="KEGG" id="ath:AT4G33670"/>
<dbReference type="Araport" id="AT4G33670"/>
<dbReference type="TAIR" id="AT4G33670"/>
<dbReference type="eggNOG" id="KOG1576">
    <property type="taxonomic scope" value="Eukaryota"/>
</dbReference>
<dbReference type="HOGENOM" id="CLU_023205_2_3_1"/>
<dbReference type="InParanoid" id="O81884"/>
<dbReference type="OMA" id="DYDNMFD"/>
<dbReference type="OrthoDB" id="48988at2759"/>
<dbReference type="PhylomeDB" id="O81884"/>
<dbReference type="BioCyc" id="ARA:AT4G33670-MONOMER"/>
<dbReference type="BioCyc" id="MetaCyc:AT4G33670-MONOMER"/>
<dbReference type="BRENDA" id="1.1.1.316">
    <property type="organism ID" value="399"/>
</dbReference>
<dbReference type="PRO" id="PR:O81884"/>
<dbReference type="Proteomes" id="UP000006548">
    <property type="component" value="Chromosome 4"/>
</dbReference>
<dbReference type="ExpressionAtlas" id="O81884">
    <property type="expression patterns" value="baseline and differential"/>
</dbReference>
<dbReference type="GO" id="GO:0005829">
    <property type="term" value="C:cytosol"/>
    <property type="evidence" value="ECO:0007005"/>
    <property type="project" value="TAIR"/>
</dbReference>
<dbReference type="GO" id="GO:0010349">
    <property type="term" value="F:L-galactose dehydrogenase activity"/>
    <property type="evidence" value="ECO:0000314"/>
    <property type="project" value="TAIR"/>
</dbReference>
<dbReference type="GO" id="GO:0006012">
    <property type="term" value="P:galactose metabolic process"/>
    <property type="evidence" value="ECO:0007669"/>
    <property type="project" value="UniProtKB-KW"/>
</dbReference>
<dbReference type="GO" id="GO:0019853">
    <property type="term" value="P:L-ascorbic acid biosynthetic process"/>
    <property type="evidence" value="ECO:0000315"/>
    <property type="project" value="TAIR"/>
</dbReference>
<dbReference type="CDD" id="cd19163">
    <property type="entry name" value="AKR_galDH"/>
    <property type="match status" value="1"/>
</dbReference>
<dbReference type="FunFam" id="3.20.20.100:FF:000011">
    <property type="entry name" value="Aldo/keto reductase"/>
    <property type="match status" value="1"/>
</dbReference>
<dbReference type="Gene3D" id="3.20.20.100">
    <property type="entry name" value="NADP-dependent oxidoreductase domain"/>
    <property type="match status" value="1"/>
</dbReference>
<dbReference type="InterPro" id="IPR020471">
    <property type="entry name" value="AKR"/>
</dbReference>
<dbReference type="InterPro" id="IPR044479">
    <property type="entry name" value="LGALDH-like"/>
</dbReference>
<dbReference type="InterPro" id="IPR023210">
    <property type="entry name" value="NADP_OxRdtase_dom"/>
</dbReference>
<dbReference type="InterPro" id="IPR036812">
    <property type="entry name" value="NADP_OxRdtase_dom_sf"/>
</dbReference>
<dbReference type="PANTHER" id="PTHR42686">
    <property type="entry name" value="GH17980P-RELATED"/>
    <property type="match status" value="1"/>
</dbReference>
<dbReference type="PANTHER" id="PTHR42686:SF1">
    <property type="entry name" value="GH17980P-RELATED"/>
    <property type="match status" value="1"/>
</dbReference>
<dbReference type="Pfam" id="PF00248">
    <property type="entry name" value="Aldo_ket_red"/>
    <property type="match status" value="1"/>
</dbReference>
<dbReference type="SUPFAM" id="SSF51430">
    <property type="entry name" value="NAD(P)-linked oxidoreductase"/>
    <property type="match status" value="1"/>
</dbReference>
<evidence type="ECO:0000250" key="1"/>
<evidence type="ECO:0000269" key="2">
    <source>
    </source>
</evidence>
<evidence type="ECO:0000305" key="3"/>
<sequence length="319" mass="34532">MTKIELRALGNTGLKVSAVGFGASPLGSVFGPVAEDDAVATVREAFRLGINFFDTSPYYGGTLSEKMLGKGLKALQVPRSDYIVATKCGRYKEGFDFSAERVRKSIDESLERLQLDYVDILHCHDIEFGSLDQIVSETIPALQKLKQEGKTRFIGITGLPLDIFTYVLDRVPPGTVDVILSYCHYGVNDSTLLDLLPYLKSKGVGVISASPLAMGLLTEQGPPEWHPASPELKSASKAAVAHCKSKGKKITKLALQYSLANKEISSVLVGMSSVSQVEENVAAVTELESLGMDQETLSEVEAILEPVKNLTWPSGIHQN</sequence>
<protein>
    <recommendedName>
        <fullName>L-galactose dehydrogenase</fullName>
        <shortName>At-GalDH</shortName>
        <shortName>L-GalDH</shortName>
        <ecNumber>1.1.1.316</ecNumber>
    </recommendedName>
</protein>
<proteinExistence type="evidence at protein level"/>
<feature type="chain" id="PRO_0000418776" description="L-galactose dehydrogenase">
    <location>
        <begin position="1"/>
        <end position="319"/>
    </location>
</feature>
<feature type="domain" description="SIS">
    <location>
        <begin position="122"/>
        <end position="269"/>
    </location>
</feature>
<feature type="active site" description="Proton donor" evidence="1">
    <location>
        <position position="59"/>
    </location>
</feature>
<feature type="binding site" evidence="1">
    <location>
        <position position="124"/>
    </location>
    <ligand>
        <name>substrate</name>
    </ligand>
</feature>
<feature type="sequence conflict" description="In Ref. 2; ADJ21815." evidence="3" ref="2">
    <original>K</original>
    <variation>E</variation>
    <location>
        <position position="249"/>
    </location>
</feature>
<comment type="function">
    <text evidence="2">Catalyzes the oxidation of L-galactose to L-galactono-1,4-lactone in the presence of NAD(+). Uses NAD(+) as a hydrogen acceptor much more efficiently than NADP(+).</text>
</comment>
<comment type="catalytic activity">
    <reaction evidence="2">
        <text>L-galactose + NAD(+) = L-galactono-1,4-lactone + NADH + H(+)</text>
        <dbReference type="Rhea" id="RHEA:31559"/>
        <dbReference type="ChEBI" id="CHEBI:15378"/>
        <dbReference type="ChEBI" id="CHEBI:17464"/>
        <dbReference type="ChEBI" id="CHEBI:37619"/>
        <dbReference type="ChEBI" id="CHEBI:57540"/>
        <dbReference type="ChEBI" id="CHEBI:57945"/>
        <dbReference type="EC" id="1.1.1.316"/>
    </reaction>
</comment>
<comment type="biophysicochemical properties">
    <kinetics>
        <KM evidence="2">0.08 mM for L-galactose (at pH 7.5)</KM>
        <KM evidence="2">56 mM for L-fucose (at pH 7.5)</KM>
        <KM evidence="2">20.3 uM for NAD (at pH 7.5)</KM>
        <KM evidence="2">0.59 mM for NADP (at pH 7.5)</KM>
    </kinetics>
    <phDependence>
        <text evidence="2">Optimum pH is 8.5-9.</text>
    </phDependence>
</comment>
<comment type="disruption phenotype">
    <text evidence="2">Lower leaf ascorbate concentration with accumulation of L-galactose when grown under high light conditions.</text>
</comment>
<comment type="similarity">
    <text evidence="3">Belongs to the aldo/keto reductase family.</text>
</comment>
<gene>
    <name type="primary">LGALDH</name>
    <name type="ordered locus">At4g33670</name>
    <name type="ORF">T16L1.160</name>
</gene>
<reference key="1">
    <citation type="journal article" date="2002" name="Plant J.">
        <title>Antisense suppression of l-galactose dehydrogenase in Arabidopsis thaliana provides evidence for its role in ascorbate synthesis and reveals light modulated l-galactose synthesis.</title>
        <authorList>
            <person name="Gatzek S."/>
            <person name="Wheeler G.L."/>
            <person name="Smirnoff N."/>
        </authorList>
    </citation>
    <scope>NUCLEOTIDE SEQUENCE [MRNA]</scope>
    <scope>FUNCTION</scope>
    <scope>DISRUPTION PHENOTYPE</scope>
    <scope>CATALYTIC ACTIVITY</scope>
    <scope>BIOPHYSICOCHEMICAL PROPERTIES</scope>
</reference>
<reference key="2">
    <citation type="submission" date="2010-05" db="EMBL/GenBank/DDBJ databases">
        <title>Metabolic engineering for upregulation of vitamin C biosynthesis in potato.</title>
        <authorList>
            <person name="Venkatesh J."/>
            <person name="Gururani M.A."/>
            <person name="Nookaraju A."/>
            <person name="Pandey S.K."/>
            <person name="Park S.W."/>
            <person name="Kim D.H."/>
            <person name="Chul C.S."/>
            <person name="Upadhyaya C.P."/>
        </authorList>
    </citation>
    <scope>NUCLEOTIDE SEQUENCE [MRNA]</scope>
    <source>
        <strain>cv. Columbia</strain>
    </source>
</reference>
<reference key="3">
    <citation type="journal article" date="1999" name="Nature">
        <title>Sequence and analysis of chromosome 4 of the plant Arabidopsis thaliana.</title>
        <authorList>
            <person name="Mayer K.F.X."/>
            <person name="Schueller C."/>
            <person name="Wambutt R."/>
            <person name="Murphy G."/>
            <person name="Volckaert G."/>
            <person name="Pohl T."/>
            <person name="Duesterhoeft A."/>
            <person name="Stiekema W."/>
            <person name="Entian K.-D."/>
            <person name="Terryn N."/>
            <person name="Harris B."/>
            <person name="Ansorge W."/>
            <person name="Brandt P."/>
            <person name="Grivell L.A."/>
            <person name="Rieger M."/>
            <person name="Weichselgartner M."/>
            <person name="de Simone V."/>
            <person name="Obermaier B."/>
            <person name="Mache R."/>
            <person name="Mueller M."/>
            <person name="Kreis M."/>
            <person name="Delseny M."/>
            <person name="Puigdomenech P."/>
            <person name="Watson M."/>
            <person name="Schmidtheini T."/>
            <person name="Reichert B."/>
            <person name="Portetelle D."/>
            <person name="Perez-Alonso M."/>
            <person name="Boutry M."/>
            <person name="Bancroft I."/>
            <person name="Vos P."/>
            <person name="Hoheisel J."/>
            <person name="Zimmermann W."/>
            <person name="Wedler H."/>
            <person name="Ridley P."/>
            <person name="Langham S.-A."/>
            <person name="McCullagh B."/>
            <person name="Bilham L."/>
            <person name="Robben J."/>
            <person name="van der Schueren J."/>
            <person name="Grymonprez B."/>
            <person name="Chuang Y.-J."/>
            <person name="Vandenbussche F."/>
            <person name="Braeken M."/>
            <person name="Weltjens I."/>
            <person name="Voet M."/>
            <person name="Bastiaens I."/>
            <person name="Aert R."/>
            <person name="Defoor E."/>
            <person name="Weitzenegger T."/>
            <person name="Bothe G."/>
            <person name="Ramsperger U."/>
            <person name="Hilbert H."/>
            <person name="Braun M."/>
            <person name="Holzer E."/>
            <person name="Brandt A."/>
            <person name="Peters S."/>
            <person name="van Staveren M."/>
            <person name="Dirkse W."/>
            <person name="Mooijman P."/>
            <person name="Klein Lankhorst R."/>
            <person name="Rose M."/>
            <person name="Hauf J."/>
            <person name="Koetter P."/>
            <person name="Berneiser S."/>
            <person name="Hempel S."/>
            <person name="Feldpausch M."/>
            <person name="Lamberth S."/>
            <person name="Van den Daele H."/>
            <person name="De Keyser A."/>
            <person name="Buysshaert C."/>
            <person name="Gielen J."/>
            <person name="Villarroel R."/>
            <person name="De Clercq R."/>
            <person name="van Montagu M."/>
            <person name="Rogers J."/>
            <person name="Cronin A."/>
            <person name="Quail M.A."/>
            <person name="Bray-Allen S."/>
            <person name="Clark L."/>
            <person name="Doggett J."/>
            <person name="Hall S."/>
            <person name="Kay M."/>
            <person name="Lennard N."/>
            <person name="McLay K."/>
            <person name="Mayes R."/>
            <person name="Pettett A."/>
            <person name="Rajandream M.A."/>
            <person name="Lyne M."/>
            <person name="Benes V."/>
            <person name="Rechmann S."/>
            <person name="Borkova D."/>
            <person name="Bloecker H."/>
            <person name="Scharfe M."/>
            <person name="Grimm M."/>
            <person name="Loehnert T.-H."/>
            <person name="Dose S."/>
            <person name="de Haan M."/>
            <person name="Maarse A.C."/>
            <person name="Schaefer M."/>
            <person name="Mueller-Auer S."/>
            <person name="Gabel C."/>
            <person name="Fuchs M."/>
            <person name="Fartmann B."/>
            <person name="Granderath K."/>
            <person name="Dauner D."/>
            <person name="Herzl A."/>
            <person name="Neumann S."/>
            <person name="Argiriou A."/>
            <person name="Vitale D."/>
            <person name="Liguori R."/>
            <person name="Piravandi E."/>
            <person name="Massenet O."/>
            <person name="Quigley F."/>
            <person name="Clabauld G."/>
            <person name="Muendlein A."/>
            <person name="Felber R."/>
            <person name="Schnabl S."/>
            <person name="Hiller R."/>
            <person name="Schmidt W."/>
            <person name="Lecharny A."/>
            <person name="Aubourg S."/>
            <person name="Chefdor F."/>
            <person name="Cooke R."/>
            <person name="Berger C."/>
            <person name="Monfort A."/>
            <person name="Casacuberta E."/>
            <person name="Gibbons T."/>
            <person name="Weber N."/>
            <person name="Vandenbol M."/>
            <person name="Bargues M."/>
            <person name="Terol J."/>
            <person name="Torres A."/>
            <person name="Perez-Perez A."/>
            <person name="Purnelle B."/>
            <person name="Bent E."/>
            <person name="Johnson S."/>
            <person name="Tacon D."/>
            <person name="Jesse T."/>
            <person name="Heijnen L."/>
            <person name="Schwarz S."/>
            <person name="Scholler P."/>
            <person name="Heber S."/>
            <person name="Francs P."/>
            <person name="Bielke C."/>
            <person name="Frishman D."/>
            <person name="Haase D."/>
            <person name="Lemcke K."/>
            <person name="Mewes H.-W."/>
            <person name="Stocker S."/>
            <person name="Zaccaria P."/>
            <person name="Bevan M."/>
            <person name="Wilson R.K."/>
            <person name="de la Bastide M."/>
            <person name="Habermann K."/>
            <person name="Parnell L."/>
            <person name="Dedhia N."/>
            <person name="Gnoj L."/>
            <person name="Schutz K."/>
            <person name="Huang E."/>
            <person name="Spiegel L."/>
            <person name="Sekhon M."/>
            <person name="Murray J."/>
            <person name="Sheet P."/>
            <person name="Cordes M."/>
            <person name="Abu-Threideh J."/>
            <person name="Stoneking T."/>
            <person name="Kalicki J."/>
            <person name="Graves T."/>
            <person name="Harmon G."/>
            <person name="Edwards J."/>
            <person name="Latreille P."/>
            <person name="Courtney L."/>
            <person name="Cloud J."/>
            <person name="Abbott A."/>
            <person name="Scott K."/>
            <person name="Johnson D."/>
            <person name="Minx P."/>
            <person name="Bentley D."/>
            <person name="Fulton B."/>
            <person name="Miller N."/>
            <person name="Greco T."/>
            <person name="Kemp K."/>
            <person name="Kramer J."/>
            <person name="Fulton L."/>
            <person name="Mardis E."/>
            <person name="Dante M."/>
            <person name="Pepin K."/>
            <person name="Hillier L.W."/>
            <person name="Nelson J."/>
            <person name="Spieth J."/>
            <person name="Ryan E."/>
            <person name="Andrews S."/>
            <person name="Geisel C."/>
            <person name="Layman D."/>
            <person name="Du H."/>
            <person name="Ali J."/>
            <person name="Berghoff A."/>
            <person name="Jones K."/>
            <person name="Drone K."/>
            <person name="Cotton M."/>
            <person name="Joshu C."/>
            <person name="Antonoiu B."/>
            <person name="Zidanic M."/>
            <person name="Strong C."/>
            <person name="Sun H."/>
            <person name="Lamar B."/>
            <person name="Yordan C."/>
            <person name="Ma P."/>
            <person name="Zhong J."/>
            <person name="Preston R."/>
            <person name="Vil D."/>
            <person name="Shekher M."/>
            <person name="Matero A."/>
            <person name="Shah R."/>
            <person name="Swaby I.K."/>
            <person name="O'Shaughnessy A."/>
            <person name="Rodriguez M."/>
            <person name="Hoffman J."/>
            <person name="Till S."/>
            <person name="Granat S."/>
            <person name="Shohdy N."/>
            <person name="Hasegawa A."/>
            <person name="Hameed A."/>
            <person name="Lodhi M."/>
            <person name="Johnson A."/>
            <person name="Chen E."/>
            <person name="Marra M.A."/>
            <person name="Martienssen R."/>
            <person name="McCombie W.R."/>
        </authorList>
    </citation>
    <scope>NUCLEOTIDE SEQUENCE [LARGE SCALE GENOMIC DNA]</scope>
    <source>
        <strain>cv. Columbia</strain>
    </source>
</reference>
<reference key="4">
    <citation type="journal article" date="2017" name="Plant J.">
        <title>Araport11: a complete reannotation of the Arabidopsis thaliana reference genome.</title>
        <authorList>
            <person name="Cheng C.Y."/>
            <person name="Krishnakumar V."/>
            <person name="Chan A.P."/>
            <person name="Thibaud-Nissen F."/>
            <person name="Schobel S."/>
            <person name="Town C.D."/>
        </authorList>
    </citation>
    <scope>GENOME REANNOTATION</scope>
    <source>
        <strain>cv. Columbia</strain>
    </source>
</reference>
<reference key="5">
    <citation type="journal article" date="2003" name="Science">
        <title>Empirical analysis of transcriptional activity in the Arabidopsis genome.</title>
        <authorList>
            <person name="Yamada K."/>
            <person name="Lim J."/>
            <person name="Dale J.M."/>
            <person name="Chen H."/>
            <person name="Shinn P."/>
            <person name="Palm C.J."/>
            <person name="Southwick A.M."/>
            <person name="Wu H.C."/>
            <person name="Kim C.J."/>
            <person name="Nguyen M."/>
            <person name="Pham P.K."/>
            <person name="Cheuk R.F."/>
            <person name="Karlin-Newmann G."/>
            <person name="Liu S.X."/>
            <person name="Lam B."/>
            <person name="Sakano H."/>
            <person name="Wu T."/>
            <person name="Yu G."/>
            <person name="Miranda M."/>
            <person name="Quach H.L."/>
            <person name="Tripp M."/>
            <person name="Chang C.H."/>
            <person name="Lee J.M."/>
            <person name="Toriumi M.J."/>
            <person name="Chan M.M."/>
            <person name="Tang C.C."/>
            <person name="Onodera C.S."/>
            <person name="Deng J.M."/>
            <person name="Akiyama K."/>
            <person name="Ansari Y."/>
            <person name="Arakawa T."/>
            <person name="Banh J."/>
            <person name="Banno F."/>
            <person name="Bowser L."/>
            <person name="Brooks S.Y."/>
            <person name="Carninci P."/>
            <person name="Chao Q."/>
            <person name="Choy N."/>
            <person name="Enju A."/>
            <person name="Goldsmith A.D."/>
            <person name="Gurjal M."/>
            <person name="Hansen N.F."/>
            <person name="Hayashizaki Y."/>
            <person name="Johnson-Hopson C."/>
            <person name="Hsuan V.W."/>
            <person name="Iida K."/>
            <person name="Karnes M."/>
            <person name="Khan S."/>
            <person name="Koesema E."/>
            <person name="Ishida J."/>
            <person name="Jiang P.X."/>
            <person name="Jones T."/>
            <person name="Kawai J."/>
            <person name="Kamiya A."/>
            <person name="Meyers C."/>
            <person name="Nakajima M."/>
            <person name="Narusaka M."/>
            <person name="Seki M."/>
            <person name="Sakurai T."/>
            <person name="Satou M."/>
            <person name="Tamse R."/>
            <person name="Vaysberg M."/>
            <person name="Wallender E.K."/>
            <person name="Wong C."/>
            <person name="Yamamura Y."/>
            <person name="Yuan S."/>
            <person name="Shinozaki K."/>
            <person name="Davis R.W."/>
            <person name="Theologis A."/>
            <person name="Ecker J.R."/>
        </authorList>
    </citation>
    <scope>NUCLEOTIDE SEQUENCE [LARGE SCALE MRNA]</scope>
    <source>
        <strain>cv. Columbia</strain>
    </source>
</reference>
<organism>
    <name type="scientific">Arabidopsis thaliana</name>
    <name type="common">Mouse-ear cress</name>
    <dbReference type="NCBI Taxonomy" id="3702"/>
    <lineage>
        <taxon>Eukaryota</taxon>
        <taxon>Viridiplantae</taxon>
        <taxon>Streptophyta</taxon>
        <taxon>Embryophyta</taxon>
        <taxon>Tracheophyta</taxon>
        <taxon>Spermatophyta</taxon>
        <taxon>Magnoliopsida</taxon>
        <taxon>eudicotyledons</taxon>
        <taxon>Gunneridae</taxon>
        <taxon>Pentapetalae</taxon>
        <taxon>rosids</taxon>
        <taxon>malvids</taxon>
        <taxon>Brassicales</taxon>
        <taxon>Brassicaceae</taxon>
        <taxon>Camelineae</taxon>
        <taxon>Arabidopsis</taxon>
    </lineage>
</organism>